<organism>
    <name type="scientific">Enterobacteria phage T4</name>
    <name type="common">Bacteriophage T4</name>
    <dbReference type="NCBI Taxonomy" id="10665"/>
    <lineage>
        <taxon>Viruses</taxon>
        <taxon>Duplodnaviria</taxon>
        <taxon>Heunggongvirae</taxon>
        <taxon>Uroviricota</taxon>
        <taxon>Caudoviricetes</taxon>
        <taxon>Straboviridae</taxon>
        <taxon>Tevenvirinae</taxon>
        <taxon>Tequatrovirus</taxon>
    </lineage>
</organism>
<protein>
    <recommendedName>
        <fullName evidence="1">Baseplate wedge protein gp7</fullName>
    </recommendedName>
    <alternativeName>
        <fullName>Gene product 7</fullName>
        <shortName>gp7</shortName>
    </alternativeName>
</protein>
<comment type="function">
    <text evidence="3 6 7">Intermediate/inner baseplate protein (PubMed:15315755, PubMed:27193680). The gp25-(gp6)2-gp7 module is involved in sheath contraction (PubMed:27193680). Involved in the tail assembly (PubMed:21129200).</text>
</comment>
<comment type="subunit">
    <text evidence="1 6">Heterotrimer with gp6; assembles as a (gp6)2-gp7 heterotrimeric molecule. The (gp6)2-gp7 heterotrimeric molecule further interacts with gp25 and gp53. The gp25-(gp6)2-gp7 module is involved in sheath contraction. Interacts with gp8. Binds to gp10 homotrimer; disulfide-linked. Heteromultimer with gp10; a gp10 molecule is disulfide-linked to gp7 and the other two remaining gp10 molecules form a disulfide bond. Part of the baseplate macromolecular complex which consists of gp5, gp5.4, gp27 (central spike complex); gp6, gp25, gp53 (inner baseplate); gp7, gp8 (intermediate baseplate); gp9, gp10, gp11, gp12 (peripheral); gp48 and gp54 (proximal region of the tail tube).</text>
</comment>
<comment type="subcellular location">
    <subcellularLocation>
        <location evidence="1 3 4 5 6">Virion</location>
    </subcellularLocation>
    <text evidence="7">Present in 6 copies in the baseplate.</text>
</comment>
<comment type="similarity">
    <text evidence="1">Belongs to the T4likevirus baseplate wedge protein gp7 family.</text>
</comment>
<proteinExistence type="evidence at protein level"/>
<keyword id="KW-0002">3D-structure</keyword>
<keyword id="KW-1015">Disulfide bond</keyword>
<keyword id="KW-0426">Late protein</keyword>
<keyword id="KW-1185">Reference proteome</keyword>
<keyword id="KW-1226">Viral baseplate protein</keyword>
<keyword id="KW-1188">Viral release from host cell</keyword>
<keyword id="KW-1245">Viral tail assembly</keyword>
<keyword id="KW-1227">Viral tail protein</keyword>
<keyword id="KW-0946">Virion</keyword>
<name>BP07_BPT4</name>
<accession>P19061</accession>
<gene>
    <name type="primary">7</name>
</gene>
<evidence type="ECO:0000255" key="1">
    <source>
        <dbReference type="HAMAP-Rule" id="MF_04103"/>
    </source>
</evidence>
<evidence type="ECO:0000256" key="2">
    <source>
        <dbReference type="SAM" id="MobiDB-lite"/>
    </source>
</evidence>
<evidence type="ECO:0000269" key="3">
    <source>
    </source>
</evidence>
<evidence type="ECO:0000269" key="4">
    <source>
    </source>
</evidence>
<evidence type="ECO:0000269" key="5">
    <source>
    </source>
</evidence>
<evidence type="ECO:0000269" key="6">
    <source>
    </source>
</evidence>
<evidence type="ECO:0000303" key="7">
    <source>
    </source>
</evidence>
<dbReference type="EMBL" id="X15907">
    <property type="protein sequence ID" value="CAA34022.1"/>
    <property type="molecule type" value="Genomic_DNA"/>
</dbReference>
<dbReference type="EMBL" id="AF158101">
    <property type="protein sequence ID" value="AAD42518.1"/>
    <property type="molecule type" value="Genomic_DNA"/>
</dbReference>
<dbReference type="PIR" id="JQ0657">
    <property type="entry name" value="G7BPT4"/>
</dbReference>
<dbReference type="RefSeq" id="NP_049765.1">
    <property type="nucleotide sequence ID" value="NC_000866.4"/>
</dbReference>
<dbReference type="PDB" id="5HX2">
    <property type="method" value="EM"/>
    <property type="resolution" value="3.80 A"/>
    <property type="chains" value="A=1-1032"/>
</dbReference>
<dbReference type="PDB" id="5IV5">
    <property type="method" value="EM"/>
    <property type="resolution" value="4.11 A"/>
    <property type="chains" value="BJ/C/EC/GF/Z/w=1-1032"/>
</dbReference>
<dbReference type="PDB" id="5IV7">
    <property type="method" value="EM"/>
    <property type="resolution" value="6.77 A"/>
    <property type="chains" value="C/CA/EC/S/i/y=1-1032"/>
</dbReference>
<dbReference type="PDBsum" id="5HX2"/>
<dbReference type="PDBsum" id="5IV5"/>
<dbReference type="PDBsum" id="5IV7"/>
<dbReference type="EMDB" id="EMD-8064"/>
<dbReference type="SMR" id="P19061"/>
<dbReference type="TCDB" id="1.K.1.1.1">
    <property type="family name" value="the gp27/5 t4-baseplate (t4-bp) family"/>
</dbReference>
<dbReference type="GeneID" id="1258549"/>
<dbReference type="KEGG" id="vg:1258549"/>
<dbReference type="OrthoDB" id="54at10239"/>
<dbReference type="EvolutionaryTrace" id="P19061"/>
<dbReference type="Proteomes" id="UP000009087">
    <property type="component" value="Segment"/>
</dbReference>
<dbReference type="GO" id="GO:0098025">
    <property type="term" value="C:virus tail, baseplate"/>
    <property type="evidence" value="ECO:0000314"/>
    <property type="project" value="UniProtKB"/>
</dbReference>
<dbReference type="GO" id="GO:0098003">
    <property type="term" value="P:viral tail assembly"/>
    <property type="evidence" value="ECO:0007669"/>
    <property type="project" value="UniProtKB-KW"/>
</dbReference>
<dbReference type="CDD" id="cd00063">
    <property type="entry name" value="FN3"/>
    <property type="match status" value="1"/>
</dbReference>
<dbReference type="Gene3D" id="2.60.40.10">
    <property type="entry name" value="Immunoglobulins"/>
    <property type="match status" value="1"/>
</dbReference>
<dbReference type="HAMAP" id="MF_04103">
    <property type="entry name" value="BP07_T4"/>
    <property type="match status" value="1"/>
</dbReference>
<dbReference type="InterPro" id="IPR003961">
    <property type="entry name" value="FN3_dom"/>
</dbReference>
<dbReference type="InterPro" id="IPR036116">
    <property type="entry name" value="FN3_sf"/>
</dbReference>
<dbReference type="InterPro" id="IPR048811">
    <property type="entry name" value="Gp7_dom_V"/>
</dbReference>
<dbReference type="InterPro" id="IPR048812">
    <property type="entry name" value="Gp7_dom_VI"/>
</dbReference>
<dbReference type="InterPro" id="IPR048810">
    <property type="entry name" value="Gp7_helical"/>
</dbReference>
<dbReference type="InterPro" id="IPR034697">
    <property type="entry name" value="GP7_T4"/>
</dbReference>
<dbReference type="InterPro" id="IPR013783">
    <property type="entry name" value="Ig-like_fold"/>
</dbReference>
<dbReference type="Pfam" id="PF21427">
    <property type="entry name" value="Gp7_5th"/>
    <property type="match status" value="1"/>
</dbReference>
<dbReference type="Pfam" id="PF21456">
    <property type="entry name" value="Gp7_6th"/>
    <property type="match status" value="1"/>
</dbReference>
<dbReference type="Pfam" id="PF21428">
    <property type="entry name" value="Gp7_helical"/>
    <property type="match status" value="1"/>
</dbReference>
<dbReference type="SUPFAM" id="SSF49265">
    <property type="entry name" value="Fibronectin type III"/>
    <property type="match status" value="1"/>
</dbReference>
<organismHost>
    <name type="scientific">Escherichia coli</name>
    <dbReference type="NCBI Taxonomy" id="562"/>
</organismHost>
<sequence>MTVKAPSVTSLRISKLSANQVQVRWDDVGANFYYFVEIAETKTNSGENLPSNQYRWINLGYTANNSFFFDDADPLTTYIIRVATAAQDFEQSDWIYTEEFETFATNAYTFQNMIEMQLANKFIQEKFTLNNSDYVNFNNDTIMAALMNESFQFSPSYVDVSSISNFIIGENEYHEIQGSIQQVCKDINRVYLMESEGILYLFERYQPVVKVSNDKGQTWKAVKLFNDRVGYPLSKTVYYQSANTTYVLGYDKIFYGRKSTDVRWSADDVRFSSQDITFAKLGDQLHLGFDVEIFATYATLPANVYRIAEAITCTDDYIYVVARDKVRYIKTSNALIDFDPLSPTYSERLFEPDTMTITGNPKAVCYKMDSICDKVFALIIGEVETLNANPRTSKIIDSADKGIYVLNHDEKTWKRVFGNTEEERRRIQPGYANMSTDGKLVSLSSSNFKFLSDNVVNDPETAAKYQLIGAVKYEFPREWLADKHYHMMAFIADETSDWETFTPQPMKYYAEPFFNWSKKSNTRCWINNSDRAVVVYADLKYTKVIENIPETSPDRLVHEYWDDGDCTIVMPNVKFTGFKKYASGMLFYKASGEIISYYDFNYRVRDTVEIIWKPTEVFLKAFLQNQEHETPWSPEEERGLADPDLRPLIGTMMPDSYLLQDSNFEAFCEAYIQYLSDGYGTQYNNLRNLIRNQYPREEHAWEYLWSEIYKRNIYLNADKRDAVARFFESRSYDFYSTKGIEASYKFLFKVLYNEEVEIEIESGAGTEYDIIVQSDSLTEDLVGQTIYTATGRCNVTYIERSYSNGKLQWTVTIHNLLGRLIAGQEVKAERLPSFEGEIIRGVKGKDLLQNNIDYINRSRSYYVMKIKSNLPSSRWKSDVIRFVHPVGFGFIAITLLTMFINVGLTLKHTETIINKYKNYKWDSGLPTEYADRIAKLTPTGEIEHDSVTGEAIYEPGPMAGVKYPLPDDYNAENNNSIFQGQLPSERRKLMSPLFDASGTTFAQFRDLVNKRLKDNIGNPRDPENPTQVKIDE</sequence>
<reference key="1">
    <citation type="journal article" date="1990" name="Nucleic Acids Res.">
        <title>Nucleotide sequences of bacteriophage T4 genes 6, 7 and 8.</title>
        <authorList>
            <person name="Efimov V.P."/>
            <person name="Prilipov A.G."/>
            <person name="Mesyanzhinov V.V."/>
        </authorList>
    </citation>
    <scope>NUCLEOTIDE SEQUENCE [GENOMIC DNA]</scope>
    <source>
        <strain>D</strain>
    </source>
</reference>
<reference key="2">
    <citation type="journal article" date="2003" name="Microbiol. Mol. Biol. Rev.">
        <title>Bacteriophage T4 genome.</title>
        <authorList>
            <person name="Miller E.S."/>
            <person name="Kutter E."/>
            <person name="Mosig G."/>
            <person name="Arisaka F."/>
            <person name="Kunisawa T."/>
            <person name="Ruger W."/>
        </authorList>
    </citation>
    <scope>NUCLEOTIDE SEQUENCE [LARGE SCALE GENOMIC DNA]</scope>
</reference>
<reference key="3">
    <citation type="journal article" date="1990" name="J. Mol. Biol.">
        <title>Localization of the proteins gp7, gp8 and gp10 in the bacteriophage T4 baseplate with colloidal gold: F(ab)2 and undecagold: Fab' conjugates.</title>
        <authorList>
            <person name="Watts N.R."/>
            <person name="Hainfeld J."/>
            <person name="Coombs D.H."/>
        </authorList>
    </citation>
    <scope>FUNCTION</scope>
    <scope>SUBCELLULAR LOCATION</scope>
</reference>
<reference key="4">
    <citation type="journal article" date="1990" name="J. Virol.">
        <title>Structure of the bacteriophage T4 baseplate as determined by chemical cross-linking.</title>
        <authorList>
            <person name="Watts N.R."/>
            <person name="Coombs D.H."/>
        </authorList>
    </citation>
    <scope>SUBCELLULAR LOCATION</scope>
</reference>
<reference key="5">
    <citation type="journal article" date="2003" name="Cell. Mol. Life Sci.">
        <title>Structure and morphogenesis of bacteriophage T4.</title>
        <authorList>
            <person name="Leiman P.G."/>
            <person name="Kanamaru S."/>
            <person name="Mesyanzhinov V.V."/>
            <person name="Arisaka F."/>
            <person name="Rossmann M.G."/>
        </authorList>
    </citation>
    <scope>REVIEW</scope>
</reference>
<reference key="6">
    <citation type="journal article" date="2010" name="Virol. J.">
        <title>Morphogenesis of the T4 tail and tail fibers.</title>
        <authorList>
            <person name="Leiman P.G."/>
            <person name="Arisaka F."/>
            <person name="van Raaij M.J."/>
            <person name="Kostyuchenko V.A."/>
            <person name="Aksyuk A.A."/>
            <person name="Kanamaru S."/>
            <person name="Rossmann M.G."/>
        </authorList>
    </citation>
    <scope>REVIEW ON FUNCTION</scope>
</reference>
<reference key="7">
    <citation type="journal article" date="2010" name="J. Mol. Biol.">
        <title>The baseplate wedges of bacteriophage T4 spontaneously assemble into hubless baseplate-like structure in vitro.</title>
        <authorList>
            <person name="Yap M.L."/>
            <person name="Mio K."/>
            <person name="Leiman P.G."/>
            <person name="Kanamaru S."/>
            <person name="Arisaka F."/>
        </authorList>
    </citation>
    <scope>SUBUNIT</scope>
</reference>
<reference key="8">
    <citation type="journal article" date="2004" name="Cell">
        <title>Three-dimensional rearrangement of proteins in the tail of bacteriophage T4 on infection of its host.</title>
        <authorList>
            <person name="Leiman P.G."/>
            <person name="Chipman P.R."/>
            <person name="Kostyuchenko V.A."/>
            <person name="Mesyanzhinov V.V."/>
            <person name="Rossmann M.G."/>
        </authorList>
    </citation>
    <scope>STRUCTURE BY ELECTRON MICROSCOPY (17.0 ANGSTROMS) OF THE CONTRACTED TAIL</scope>
    <scope>SUBCELLULAR LOCATION</scope>
</reference>
<reference key="9">
    <citation type="journal article" date="2016" name="Nature">
        <title>Structure of the T4 baseplate and its function in triggering sheath contraction.</title>
        <authorList>
            <person name="Taylor N.M."/>
            <person name="Prokhorov N.S."/>
            <person name="Guerrero-Ferreira R.C."/>
            <person name="Shneider M.M."/>
            <person name="Browning C."/>
            <person name="Goldie K.N."/>
            <person name="Stahlberg H."/>
            <person name="Leiman P.G."/>
        </authorList>
    </citation>
    <scope>STRUCTURE BY ELECTRON MICROSCOPY (4.11 ANGSTROMS)</scope>
    <scope>SUBUNIT</scope>
    <scope>SUBCELLULAR LOCATION</scope>
    <scope>FUNCTION</scope>
    <scope>INTERACTION WITH GP6</scope>
    <scope>INTERACTION WITH GP8</scope>
    <scope>DISULFIDE BOND</scope>
    <scope>INTERACTION WITH GP10</scope>
</reference>
<feature type="chain" id="PRO_0000164997" description="Baseplate wedge protein gp7">
    <location>
        <begin position="1"/>
        <end position="1032"/>
    </location>
</feature>
<feature type="region of interest" description="Disordered" evidence="2">
    <location>
        <begin position="1012"/>
        <end position="1032"/>
    </location>
</feature>
<feature type="disulfide bond" description="Interchain (with C-555 in GP10)" evidence="6">
    <location>
        <position position="184"/>
    </location>
</feature>